<sequence>MIPMVKYKDTINLYDEKGKLVEENVPLEAISPLHNPTIQKLVKDVKRTVAVNLAGIENALRTGQVGGKGCMIKGRELDLPIVENAETIAEYVEKVVRVSEDDDTSIKLINDGKQMAVQIPSKRLDVAAEYSVSVLVTAQALKEAIIRTFDVDIFDAPMVHAAVLGGYPHEVTMKGSNIAALLGSPLSLEGPGYALRNIMANHFVACTKKNVMNAVAFAAIMEQTAMFEMGDAVGLFERLHLLGLAYQGLNADNLVIDLVKANGKNGTVGTVVASVVERALEDGVIKEDKTLPSGFKLYKPVDVAKWNAYAAAGLVAAAIVNCGAARAAQNIASTILYYNDILEYETGLPGVDFGRAEGTAVGFSFFSHSIYGGGGPGIFNGNHIVTRHSKGFAIPPVAAAMCLDAGTQMFSPERTSALVGTVFSAIDEFREPLKYVIKGALEVKDKI</sequence>
<keyword id="KW-0963">Cytoplasm</keyword>
<keyword id="KW-0484">Methanogenesis</keyword>
<keyword id="KW-1185">Reference proteome</keyword>
<keyword id="KW-0808">Transferase</keyword>
<comment type="function">
    <text evidence="1">Component of the methyl-coenzyme M reductase (MCR) I that catalyzes the reductive cleavage of methyl-coenzyme M (CoM-S-CH3 or 2-(methylthio)ethanesulfonate) using coenzyme B (CoB or 7-mercaptoheptanoylthreonine phosphate) as reductant which results in the production of methane and the mixed heterodisulfide of CoB and CoM (CoM-S-S-CoB). This is the final step in methanogenesis.</text>
</comment>
<comment type="catalytic activity">
    <reaction evidence="1">
        <text>coenzyme B + methyl-coenzyme M = methane + coenzyme M-coenzyme B heterodisulfide</text>
        <dbReference type="Rhea" id="RHEA:12532"/>
        <dbReference type="ChEBI" id="CHEBI:16183"/>
        <dbReference type="ChEBI" id="CHEBI:58286"/>
        <dbReference type="ChEBI" id="CHEBI:58411"/>
        <dbReference type="ChEBI" id="CHEBI:58596"/>
        <dbReference type="EC" id="2.8.4.1"/>
    </reaction>
    <physiologicalReaction direction="left-to-right" evidence="1">
        <dbReference type="Rhea" id="RHEA:12533"/>
    </physiologicalReaction>
</comment>
<comment type="cofactor">
    <cofactor evidence="1">
        <name>coenzyme F430</name>
        <dbReference type="ChEBI" id="CHEBI:60540"/>
    </cofactor>
    <text evidence="1">Binds 2 coenzyme F430 non-covalently per MCR complex. Coenzyme F430 is a yellow nickel porphinoid. Methyl-coenzyme-M reductase is activated when the enzyme-bound coenzyme F430 is reduced to the Ni(I) oxidation state.</text>
</comment>
<comment type="pathway">
    <text evidence="1">One-carbon metabolism; methyl-coenzyme M reduction; methane from methyl-coenzyme M: step 1/1.</text>
</comment>
<comment type="subunit">
    <text evidence="1">MCR is a hexamer of two alpha, two beta, and two gamma chains, forming a dimer of heterotrimers.</text>
</comment>
<comment type="subcellular location">
    <subcellularLocation>
        <location evidence="1">Cytoplasm</location>
    </subcellularLocation>
</comment>
<comment type="similarity">
    <text evidence="2">Belongs to the methyl-coenzyme M reductase beta subunit family.</text>
</comment>
<proteinExistence type="inferred from homology"/>
<protein>
    <recommendedName>
        <fullName>Methyl-coenzyme M reductase I subunit beta</fullName>
        <shortName>MCR I beta</shortName>
        <ecNumber evidence="1">2.8.4.1</ecNumber>
    </recommendedName>
    <alternativeName>
        <fullName>Coenzyme-B sulfoethylthiotransferase beta</fullName>
    </alternativeName>
</protein>
<feature type="chain" id="PRO_0000147465" description="Methyl-coenzyme M reductase I subunit beta">
    <location>
        <begin position="1"/>
        <end position="447"/>
    </location>
</feature>
<feature type="binding site" evidence="1">
    <location>
        <position position="371"/>
    </location>
    <ligand>
        <name>coenzyme M</name>
        <dbReference type="ChEBI" id="CHEBI:58319"/>
    </ligand>
</feature>
<feature type="binding site" evidence="1">
    <location>
        <position position="373"/>
    </location>
    <ligand>
        <name>coenzyme B</name>
        <dbReference type="ChEBI" id="CHEBI:58596"/>
    </ligand>
</feature>
<dbReference type="EC" id="2.8.4.1" evidence="1"/>
<dbReference type="EMBL" id="L77117">
    <property type="protein sequence ID" value="AAB98847.1"/>
    <property type="molecule type" value="Genomic_DNA"/>
</dbReference>
<dbReference type="SMR" id="Q58252"/>
<dbReference type="FunCoup" id="Q58252">
    <property type="interactions" value="92"/>
</dbReference>
<dbReference type="STRING" id="243232.MJ_0842"/>
<dbReference type="PaxDb" id="243232-MJ_0842"/>
<dbReference type="EnsemblBacteria" id="AAB98847">
    <property type="protein sequence ID" value="AAB98847"/>
    <property type="gene ID" value="MJ_0842"/>
</dbReference>
<dbReference type="KEGG" id="mja:MJ_0842"/>
<dbReference type="eggNOG" id="arCOG04860">
    <property type="taxonomic scope" value="Archaea"/>
</dbReference>
<dbReference type="HOGENOM" id="CLU_617682_0_0_2"/>
<dbReference type="InParanoid" id="Q58252"/>
<dbReference type="PhylomeDB" id="Q58252"/>
<dbReference type="UniPathway" id="UPA00646">
    <property type="reaction ID" value="UER00699"/>
</dbReference>
<dbReference type="Proteomes" id="UP000000805">
    <property type="component" value="Chromosome"/>
</dbReference>
<dbReference type="GO" id="GO:0005737">
    <property type="term" value="C:cytoplasm"/>
    <property type="evidence" value="ECO:0007669"/>
    <property type="project" value="UniProtKB-SubCell"/>
</dbReference>
<dbReference type="GO" id="GO:0050524">
    <property type="term" value="F:coenzyme-B sulfoethylthiotransferase activity"/>
    <property type="evidence" value="ECO:0007669"/>
    <property type="project" value="UniProtKB-EC"/>
</dbReference>
<dbReference type="GO" id="GO:0015948">
    <property type="term" value="P:methanogenesis"/>
    <property type="evidence" value="ECO:0007669"/>
    <property type="project" value="UniProtKB-KW"/>
</dbReference>
<dbReference type="Gene3D" id="3.30.70.470">
    <property type="match status" value="1"/>
</dbReference>
<dbReference type="Gene3D" id="1.20.840.10">
    <property type="entry name" value="Methyl-coenzyme M reductase, alpha/beta subunit, C-terminal"/>
    <property type="match status" value="1"/>
</dbReference>
<dbReference type="InterPro" id="IPR008924">
    <property type="entry name" value="Me_CoM_Rdtase_asu/bsu_C"/>
</dbReference>
<dbReference type="InterPro" id="IPR015823">
    <property type="entry name" value="Me_CoM_Rdtase_asu_N_sub2"/>
</dbReference>
<dbReference type="InterPro" id="IPR003179">
    <property type="entry name" value="Me_CoM_Rdtase_bsu"/>
</dbReference>
<dbReference type="InterPro" id="IPR022679">
    <property type="entry name" value="Me_CoM_Rdtase_bsu_C"/>
</dbReference>
<dbReference type="InterPro" id="IPR022680">
    <property type="entry name" value="Me_CoM_Rdtase_bsu_N"/>
</dbReference>
<dbReference type="InterPro" id="IPR009024">
    <property type="entry name" value="Me_CoM_Rdtase_Fd-like_fold"/>
</dbReference>
<dbReference type="NCBIfam" id="TIGR03257">
    <property type="entry name" value="met_CoM_red_bet"/>
    <property type="match status" value="1"/>
</dbReference>
<dbReference type="Pfam" id="PF02241">
    <property type="entry name" value="MCR_beta"/>
    <property type="match status" value="1"/>
</dbReference>
<dbReference type="Pfam" id="PF02783">
    <property type="entry name" value="MCR_beta_N"/>
    <property type="match status" value="1"/>
</dbReference>
<dbReference type="PIRSF" id="PIRSF000263">
    <property type="entry name" value="Meth_CoM_rd_beta"/>
    <property type="match status" value="1"/>
</dbReference>
<dbReference type="SUPFAM" id="SSF48081">
    <property type="entry name" value="Methyl-coenzyme M reductase alpha and beta chain C-terminal domain"/>
    <property type="match status" value="1"/>
</dbReference>
<dbReference type="SUPFAM" id="SSF55088">
    <property type="entry name" value="Methyl-coenzyme M reductase subunits"/>
    <property type="match status" value="1"/>
</dbReference>
<reference key="1">
    <citation type="journal article" date="1996" name="Science">
        <title>Complete genome sequence of the methanogenic archaeon, Methanococcus jannaschii.</title>
        <authorList>
            <person name="Bult C.J."/>
            <person name="White O."/>
            <person name="Olsen G.J."/>
            <person name="Zhou L."/>
            <person name="Fleischmann R.D."/>
            <person name="Sutton G.G."/>
            <person name="Blake J.A."/>
            <person name="FitzGerald L.M."/>
            <person name="Clayton R.A."/>
            <person name="Gocayne J.D."/>
            <person name="Kerlavage A.R."/>
            <person name="Dougherty B.A."/>
            <person name="Tomb J.-F."/>
            <person name="Adams M.D."/>
            <person name="Reich C.I."/>
            <person name="Overbeek R."/>
            <person name="Kirkness E.F."/>
            <person name="Weinstock K.G."/>
            <person name="Merrick J.M."/>
            <person name="Glodek A."/>
            <person name="Scott J.L."/>
            <person name="Geoghagen N.S.M."/>
            <person name="Weidman J.F."/>
            <person name="Fuhrmann J.L."/>
            <person name="Nguyen D."/>
            <person name="Utterback T.R."/>
            <person name="Kelley J.M."/>
            <person name="Peterson J.D."/>
            <person name="Sadow P.W."/>
            <person name="Hanna M.C."/>
            <person name="Cotton M.D."/>
            <person name="Roberts K.M."/>
            <person name="Hurst M.A."/>
            <person name="Kaine B.P."/>
            <person name="Borodovsky M."/>
            <person name="Klenk H.-P."/>
            <person name="Fraser C.M."/>
            <person name="Smith H.O."/>
            <person name="Woese C.R."/>
            <person name="Venter J.C."/>
        </authorList>
    </citation>
    <scope>NUCLEOTIDE SEQUENCE [LARGE SCALE GENOMIC DNA]</scope>
    <source>
        <strain>ATCC 43067 / DSM 2661 / JAL-1 / JCM 10045 / NBRC 100440</strain>
    </source>
</reference>
<accession>Q58252</accession>
<name>MCRB_METJA</name>
<evidence type="ECO:0000250" key="1">
    <source>
        <dbReference type="UniProtKB" id="P11560"/>
    </source>
</evidence>
<evidence type="ECO:0000305" key="2"/>
<gene>
    <name type="primary">mcrB</name>
    <name type="ordered locus">MJ0842</name>
</gene>
<organism>
    <name type="scientific">Methanocaldococcus jannaschii (strain ATCC 43067 / DSM 2661 / JAL-1 / JCM 10045 / NBRC 100440)</name>
    <name type="common">Methanococcus jannaschii</name>
    <dbReference type="NCBI Taxonomy" id="243232"/>
    <lineage>
        <taxon>Archaea</taxon>
        <taxon>Methanobacteriati</taxon>
        <taxon>Methanobacteriota</taxon>
        <taxon>Methanomada group</taxon>
        <taxon>Methanococci</taxon>
        <taxon>Methanococcales</taxon>
        <taxon>Methanocaldococcaceae</taxon>
        <taxon>Methanocaldococcus</taxon>
    </lineage>
</organism>